<feature type="chain" id="PRO_0000328607" description="Myosin-K heavy chain">
    <location>
        <begin position="1"/>
        <end position="858"/>
    </location>
</feature>
<feature type="domain" description="Myosin motor" evidence="2">
    <location>
        <begin position="7"/>
        <end position="820"/>
    </location>
</feature>
<feature type="region of interest" description="Disordered" evidence="3">
    <location>
        <begin position="121"/>
        <end position="265"/>
    </location>
</feature>
<feature type="region of interest" description="Actin-binding" evidence="1">
    <location>
        <begin position="712"/>
        <end position="722"/>
    </location>
</feature>
<feature type="region of interest" description="Tail">
    <location>
        <begin position="821"/>
        <end position="858"/>
    </location>
</feature>
<feature type="compositionally biased region" description="Gly residues" evidence="3">
    <location>
        <begin position="126"/>
        <end position="139"/>
    </location>
</feature>
<feature type="compositionally biased region" description="Gly residues" evidence="3">
    <location>
        <begin position="157"/>
        <end position="182"/>
    </location>
</feature>
<feature type="compositionally biased region" description="Pro residues" evidence="3">
    <location>
        <begin position="183"/>
        <end position="228"/>
    </location>
</feature>
<feature type="compositionally biased region" description="Gly residues" evidence="3">
    <location>
        <begin position="233"/>
        <end position="245"/>
    </location>
</feature>
<feature type="binding site" evidence="1">
    <location>
        <begin position="100"/>
        <end position="107"/>
    </location>
    <ligand>
        <name>ATP</name>
        <dbReference type="ChEBI" id="CHEBI:30616"/>
    </ligand>
</feature>
<feature type="sequence conflict" description="In Ref. 2; AAD47904." evidence="7" ref="2">
    <original>Y</original>
    <variation>C</variation>
    <location>
        <position position="659"/>
    </location>
</feature>
<name>MYOK_DICDI</name>
<sequence>MFRLFSSGVDDLVLVSNPSNGEVTSQIGARFDRELIYTNIGEVLIAVNPYKALPITGPEFIKLYQNASGSDASPHIYALAERAYRRMVDENESQCVIISGESGAGKTVSAKLILQYVTSVSPNNSSGGGIGGSGGGNGGIPQYDGGSDDRPSPPMGRGMGMPGMVGRGGLPTRGGGPPSRGGGPPPTRGRGGPPPPIPQNRGAPPPVSNGGAPPPVARGPVAPPPTRGAPPTRGGGPANRGGRGGGPPPVSTSRGGGGYGGSSKTVDVEHIKKVILDSNPLMEAIGNAKTVRNDNSSRFGKYLEIQFDDNNAPVGGLISTFLLEKTRVTFQQKNERNFHIFYQMLGGLDQTTKSEWGLTQATDFYYLAQSKCTTVEDVDDGKDFHEVKAAMETVGISRDEQTEIFRILAAILHVGNIRFQGEAPASVIDETPLQWAASLLGCDPTFLCQSLNHRQIQSGSARHTQYQVPQNPDQSAGLRDALAKTLYERIFDFIVARVNKAMSFSGNCKVIGVLDIYGFEVFERNSFEQFCINYVNERLQQIFIDLTVRGEQREYHEEGMKWKDISFFDNKIVVDLIDGNKPPGIMRVLDDVCKTVHAVDSAAADIKFMEKLIHSIQSHPHLVISNTGSSADEFTIKHYAGEVSYSIEEFCFKNNDNLYASIVGCLQNSTYQFIVSLFPENIQDNKQAPTTSSFKIRQSSSYLVTRLSACTPHYIRCIKPNDKKQPMNFVSSRVEHQVKYLGILENIKVKRSGYAYRQLKDIFLNRFGKIMDVQPRNVQEFVEYITRTHKDINADEFEEGKTKIFVKNPETIFVMEDLLMQKIDPIGYKNRVQAYKENEKLAQMKQGKHSMKQKCLIQ</sequence>
<accession>Q9XXV8</accession>
<accession>Q555W0</accession>
<accession>Q86J00</accession>
<accession>Q9UA70</accession>
<gene>
    <name type="primary">myoK</name>
    <name type="synonym">myoIG</name>
    <name type="ORF">DDB_G0274575</name>
</gene>
<protein>
    <recommendedName>
        <fullName>Myosin-K heavy chain</fullName>
    </recommendedName>
</protein>
<dbReference type="EMBL" id="AB017909">
    <property type="protein sequence ID" value="BAA76319.1"/>
    <property type="molecule type" value="Genomic_DNA"/>
</dbReference>
<dbReference type="EMBL" id="AF090534">
    <property type="protein sequence ID" value="AAD47904.1"/>
    <property type="molecule type" value="mRNA"/>
</dbReference>
<dbReference type="EMBL" id="AAFI02000012">
    <property type="protein sequence ID" value="EAL70180.1"/>
    <property type="molecule type" value="Genomic_DNA"/>
</dbReference>
<dbReference type="PIR" id="JG0183">
    <property type="entry name" value="JG0183"/>
</dbReference>
<dbReference type="RefSeq" id="XP_643950.1">
    <property type="nucleotide sequence ID" value="XM_638858.1"/>
</dbReference>
<dbReference type="SMR" id="Q9XXV8"/>
<dbReference type="BioGRID" id="1244381">
    <property type="interactions" value="1"/>
</dbReference>
<dbReference type="FunCoup" id="Q9XXV8">
    <property type="interactions" value="6"/>
</dbReference>
<dbReference type="STRING" id="44689.Q9XXV8"/>
<dbReference type="GlyGen" id="Q9XXV8">
    <property type="glycosylation" value="1 site"/>
</dbReference>
<dbReference type="PaxDb" id="44689-DDB0185086"/>
<dbReference type="EnsemblProtists" id="EAL70180">
    <property type="protein sequence ID" value="EAL70180"/>
    <property type="gene ID" value="DDB_G0274575"/>
</dbReference>
<dbReference type="GeneID" id="8619378"/>
<dbReference type="KEGG" id="ddi:DDB_G0274575"/>
<dbReference type="dictyBase" id="DDB_G0274575">
    <property type="gene designation" value="myoK"/>
</dbReference>
<dbReference type="VEuPathDB" id="AmoebaDB:DDB_G0274575"/>
<dbReference type="eggNOG" id="KOG0162">
    <property type="taxonomic scope" value="Eukaryota"/>
</dbReference>
<dbReference type="HOGENOM" id="CLU_000192_7_5_1"/>
<dbReference type="InParanoid" id="Q9XXV8"/>
<dbReference type="OMA" id="WKDISFF"/>
<dbReference type="PhylomeDB" id="Q9XXV8"/>
<dbReference type="PRO" id="PR:Q9XXV8"/>
<dbReference type="Proteomes" id="UP000002195">
    <property type="component" value="Chromosome 2"/>
</dbReference>
<dbReference type="GO" id="GO:0015629">
    <property type="term" value="C:actin cytoskeleton"/>
    <property type="evidence" value="ECO:0000318"/>
    <property type="project" value="GO_Central"/>
</dbReference>
<dbReference type="GO" id="GO:0031252">
    <property type="term" value="C:cell leading edge"/>
    <property type="evidence" value="ECO:0000314"/>
    <property type="project" value="dictyBase"/>
</dbReference>
<dbReference type="GO" id="GO:0005737">
    <property type="term" value="C:cytoplasm"/>
    <property type="evidence" value="ECO:0000314"/>
    <property type="project" value="dictyBase"/>
</dbReference>
<dbReference type="GO" id="GO:0032009">
    <property type="term" value="C:early phagosome"/>
    <property type="evidence" value="ECO:0000314"/>
    <property type="project" value="dictyBase"/>
</dbReference>
<dbReference type="GO" id="GO:0070685">
    <property type="term" value="C:macropinocytic cup"/>
    <property type="evidence" value="ECO:0000314"/>
    <property type="project" value="dictyBase"/>
</dbReference>
<dbReference type="GO" id="GO:0016459">
    <property type="term" value="C:myosin complex"/>
    <property type="evidence" value="ECO:0007669"/>
    <property type="project" value="UniProtKB-KW"/>
</dbReference>
<dbReference type="GO" id="GO:0001891">
    <property type="term" value="C:phagocytic cup"/>
    <property type="evidence" value="ECO:0000314"/>
    <property type="project" value="dictyBase"/>
</dbReference>
<dbReference type="GO" id="GO:0097203">
    <property type="term" value="C:phagocytic cup lip"/>
    <property type="evidence" value="ECO:0000314"/>
    <property type="project" value="dictyBase"/>
</dbReference>
<dbReference type="GO" id="GO:0005886">
    <property type="term" value="C:plasma membrane"/>
    <property type="evidence" value="ECO:0000318"/>
    <property type="project" value="GO_Central"/>
</dbReference>
<dbReference type="GO" id="GO:0001726">
    <property type="term" value="C:ruffle"/>
    <property type="evidence" value="ECO:0000314"/>
    <property type="project" value="dictyBase"/>
</dbReference>
<dbReference type="GO" id="GO:0051015">
    <property type="term" value="F:actin filament binding"/>
    <property type="evidence" value="ECO:0000314"/>
    <property type="project" value="dictyBase"/>
</dbReference>
<dbReference type="GO" id="GO:0005524">
    <property type="term" value="F:ATP binding"/>
    <property type="evidence" value="ECO:0007669"/>
    <property type="project" value="UniProtKB-KW"/>
</dbReference>
<dbReference type="GO" id="GO:0000146">
    <property type="term" value="F:microfilament motor activity"/>
    <property type="evidence" value="ECO:0000318"/>
    <property type="project" value="GO_Central"/>
</dbReference>
<dbReference type="GO" id="GO:0005522">
    <property type="term" value="F:profilin binding"/>
    <property type="evidence" value="ECO:0000353"/>
    <property type="project" value="dictyBase"/>
</dbReference>
<dbReference type="GO" id="GO:0007015">
    <property type="term" value="P:actin filament organization"/>
    <property type="evidence" value="ECO:0000318"/>
    <property type="project" value="GO_Central"/>
</dbReference>
<dbReference type="GO" id="GO:0043327">
    <property type="term" value="P:chemotaxis to cAMP"/>
    <property type="evidence" value="ECO:0000318"/>
    <property type="project" value="GO_Central"/>
</dbReference>
<dbReference type="GO" id="GO:0030866">
    <property type="term" value="P:cortical actin cytoskeleton organization"/>
    <property type="evidence" value="ECO:0000315"/>
    <property type="project" value="dictyBase"/>
</dbReference>
<dbReference type="GO" id="GO:0006897">
    <property type="term" value="P:endocytosis"/>
    <property type="evidence" value="ECO:0000318"/>
    <property type="project" value="GO_Central"/>
</dbReference>
<dbReference type="GO" id="GO:0006911">
    <property type="term" value="P:phagocytosis, engulfment"/>
    <property type="evidence" value="ECO:0000315"/>
    <property type="project" value="dictyBase"/>
</dbReference>
<dbReference type="GO" id="GO:2000147">
    <property type="term" value="P:positive regulation of cell motility"/>
    <property type="evidence" value="ECO:0000315"/>
    <property type="project" value="dictyBase"/>
</dbReference>
<dbReference type="GO" id="GO:0050766">
    <property type="term" value="P:positive regulation of phagocytosis"/>
    <property type="evidence" value="ECO:0000315"/>
    <property type="project" value="dictyBase"/>
</dbReference>
<dbReference type="FunFam" id="1.10.10.820:FF:000001">
    <property type="entry name" value="Myosin heavy chain"/>
    <property type="match status" value="1"/>
</dbReference>
<dbReference type="FunFam" id="1.20.58.530:FF:000007">
    <property type="entry name" value="Myosin IE"/>
    <property type="match status" value="1"/>
</dbReference>
<dbReference type="Gene3D" id="1.10.10.820">
    <property type="match status" value="1"/>
</dbReference>
<dbReference type="Gene3D" id="1.20.58.530">
    <property type="match status" value="1"/>
</dbReference>
<dbReference type="Gene3D" id="3.40.850.10">
    <property type="entry name" value="Kinesin motor domain"/>
    <property type="match status" value="2"/>
</dbReference>
<dbReference type="Gene3D" id="1.20.120.720">
    <property type="entry name" value="Myosin VI head, motor domain, U50 subdomain"/>
    <property type="match status" value="1"/>
</dbReference>
<dbReference type="InterPro" id="IPR036961">
    <property type="entry name" value="Kinesin_motor_dom_sf"/>
</dbReference>
<dbReference type="InterPro" id="IPR001609">
    <property type="entry name" value="Myosin_head_motor_dom-like"/>
</dbReference>
<dbReference type="InterPro" id="IPR027417">
    <property type="entry name" value="P-loop_NTPase"/>
</dbReference>
<dbReference type="PANTHER" id="PTHR13140">
    <property type="entry name" value="MYOSIN"/>
    <property type="match status" value="1"/>
</dbReference>
<dbReference type="PANTHER" id="PTHR13140:SF743">
    <property type="entry name" value="MYOSIN-K HEAVY CHAIN"/>
    <property type="match status" value="1"/>
</dbReference>
<dbReference type="Pfam" id="PF00063">
    <property type="entry name" value="Myosin_head"/>
    <property type="match status" value="2"/>
</dbReference>
<dbReference type="PRINTS" id="PR00193">
    <property type="entry name" value="MYOSINHEAVY"/>
</dbReference>
<dbReference type="SMART" id="SM00242">
    <property type="entry name" value="MYSc"/>
    <property type="match status" value="1"/>
</dbReference>
<dbReference type="SUPFAM" id="SSF52540">
    <property type="entry name" value="P-loop containing nucleoside triphosphate hydrolases"/>
    <property type="match status" value="1"/>
</dbReference>
<dbReference type="PROSITE" id="PS51456">
    <property type="entry name" value="MYOSIN_MOTOR"/>
    <property type="match status" value="1"/>
</dbReference>
<comment type="function">
    <text evidence="4 6">Myosins are actin-based motor molecules with ATPase activity. Involved in phagocytosis and motility, and in the maintenance and dynamics of cell cortex.</text>
</comment>
<comment type="subcellular location">
    <subcellularLocation>
        <location evidence="5">Cytoplasm</location>
    </subcellularLocation>
    <text>Enriched in actin cortex regions.</text>
</comment>
<comment type="developmental stage">
    <text evidence="4">Expression stimulated at early developmental stages, before aggregation.</text>
</comment>
<comment type="domain">
    <text>The head domain possess two actin-binding sites, a classic ATP-dependent one and a secondary salt-dependent one (located inside the GPR domain).</text>
</comment>
<comment type="similarity">
    <text evidence="7">Belongs to the TRAFAC class myosin-kinesin ATPase superfamily. Myosin family.</text>
</comment>
<evidence type="ECO:0000250" key="1"/>
<evidence type="ECO:0000255" key="2">
    <source>
        <dbReference type="PROSITE-ProRule" id="PRU00782"/>
    </source>
</evidence>
<evidence type="ECO:0000256" key="3">
    <source>
        <dbReference type="SAM" id="MobiDB-lite"/>
    </source>
</evidence>
<evidence type="ECO:0000269" key="4">
    <source>
    </source>
</evidence>
<evidence type="ECO:0000269" key="5">
    <source>
    </source>
</evidence>
<evidence type="ECO:0000269" key="6">
    <source>
    </source>
</evidence>
<evidence type="ECO:0000305" key="7"/>
<reference key="1">
    <citation type="journal article" date="1999" name="Biochem. Biophys. Res. Commun.">
        <title>Novel Dictyostelium unconventional myosin MyoK is a class I myosin with the longest loop-1 insert and the shortest tail.</title>
        <authorList>
            <person name="Yazu M."/>
            <person name="Adachi H."/>
            <person name="Sutoh K."/>
        </authorList>
    </citation>
    <scope>NUCLEOTIDE SEQUENCE [GENOMIC DNA]</scope>
    <scope>FUNCTION</scope>
    <scope>DEVELOPMENTAL STAGE</scope>
    <source>
        <strain>AX2</strain>
    </source>
</reference>
<reference key="2">
    <citation type="journal article" date="1999" name="Cell Biochem. Biophys.">
        <title>A potentially exhaustive screening strategy reveals two novel divergent myosins in Dictyostelium.</title>
        <authorList>
            <person name="Schwarz E.C."/>
            <person name="Geissler H."/>
            <person name="Soldati T."/>
        </authorList>
    </citation>
    <scope>NUCLEOTIDE SEQUENCE [MRNA]</scope>
    <scope>SUBCELLULAR LOCATION</scope>
    <source>
        <strain>AX2</strain>
    </source>
</reference>
<reference key="3">
    <citation type="journal article" date="2002" name="Nature">
        <title>Sequence and analysis of chromosome 2 of Dictyostelium discoideum.</title>
        <authorList>
            <person name="Gloeckner G."/>
            <person name="Eichinger L."/>
            <person name="Szafranski K."/>
            <person name="Pachebat J.A."/>
            <person name="Bankier A.T."/>
            <person name="Dear P.H."/>
            <person name="Lehmann R."/>
            <person name="Baumgart C."/>
            <person name="Parra G."/>
            <person name="Abril J.F."/>
            <person name="Guigo R."/>
            <person name="Kumpf K."/>
            <person name="Tunggal B."/>
            <person name="Cox E.C."/>
            <person name="Quail M.A."/>
            <person name="Platzer M."/>
            <person name="Rosenthal A."/>
            <person name="Noegel A.A."/>
        </authorList>
    </citation>
    <scope>NUCLEOTIDE SEQUENCE [LARGE SCALE GENOMIC DNA]</scope>
    <source>
        <strain>AX4</strain>
    </source>
</reference>
<reference key="4">
    <citation type="journal article" date="2005" name="Nature">
        <title>The genome of the social amoeba Dictyostelium discoideum.</title>
        <authorList>
            <person name="Eichinger L."/>
            <person name="Pachebat J.A."/>
            <person name="Gloeckner G."/>
            <person name="Rajandream M.A."/>
            <person name="Sucgang R."/>
            <person name="Berriman M."/>
            <person name="Song J."/>
            <person name="Olsen R."/>
            <person name="Szafranski K."/>
            <person name="Xu Q."/>
            <person name="Tunggal B."/>
            <person name="Kummerfeld S."/>
            <person name="Madera M."/>
            <person name="Konfortov B.A."/>
            <person name="Rivero F."/>
            <person name="Bankier A.T."/>
            <person name="Lehmann R."/>
            <person name="Hamlin N."/>
            <person name="Davies R."/>
            <person name="Gaudet P."/>
            <person name="Fey P."/>
            <person name="Pilcher K."/>
            <person name="Chen G."/>
            <person name="Saunders D."/>
            <person name="Sodergren E.J."/>
            <person name="Davis P."/>
            <person name="Kerhornou A."/>
            <person name="Nie X."/>
            <person name="Hall N."/>
            <person name="Anjard C."/>
            <person name="Hemphill L."/>
            <person name="Bason N."/>
            <person name="Farbrother P."/>
            <person name="Desany B."/>
            <person name="Just E."/>
            <person name="Morio T."/>
            <person name="Rost R."/>
            <person name="Churcher C.M."/>
            <person name="Cooper J."/>
            <person name="Haydock S."/>
            <person name="van Driessche N."/>
            <person name="Cronin A."/>
            <person name="Goodhead I."/>
            <person name="Muzny D.M."/>
            <person name="Mourier T."/>
            <person name="Pain A."/>
            <person name="Lu M."/>
            <person name="Harper D."/>
            <person name="Lindsay R."/>
            <person name="Hauser H."/>
            <person name="James K.D."/>
            <person name="Quiles M."/>
            <person name="Madan Babu M."/>
            <person name="Saito T."/>
            <person name="Buchrieser C."/>
            <person name="Wardroper A."/>
            <person name="Felder M."/>
            <person name="Thangavelu M."/>
            <person name="Johnson D."/>
            <person name="Knights A."/>
            <person name="Loulseged H."/>
            <person name="Mungall K.L."/>
            <person name="Oliver K."/>
            <person name="Price C."/>
            <person name="Quail M.A."/>
            <person name="Urushihara H."/>
            <person name="Hernandez J."/>
            <person name="Rabbinowitsch E."/>
            <person name="Steffen D."/>
            <person name="Sanders M."/>
            <person name="Ma J."/>
            <person name="Kohara Y."/>
            <person name="Sharp S."/>
            <person name="Simmonds M.N."/>
            <person name="Spiegler S."/>
            <person name="Tivey A."/>
            <person name="Sugano S."/>
            <person name="White B."/>
            <person name="Walker D."/>
            <person name="Woodward J.R."/>
            <person name="Winckler T."/>
            <person name="Tanaka Y."/>
            <person name="Shaulsky G."/>
            <person name="Schleicher M."/>
            <person name="Weinstock G.M."/>
            <person name="Rosenthal A."/>
            <person name="Cox E.C."/>
            <person name="Chisholm R.L."/>
            <person name="Gibbs R.A."/>
            <person name="Loomis W.F."/>
            <person name="Platzer M."/>
            <person name="Kay R.R."/>
            <person name="Williams J.G."/>
            <person name="Dear P.H."/>
            <person name="Noegel A.A."/>
            <person name="Barrell B.G."/>
            <person name="Kuspa A."/>
        </authorList>
    </citation>
    <scope>NUCLEOTIDE SEQUENCE [LARGE SCALE GENOMIC DNA]</scope>
    <source>
        <strain>AX4</strain>
    </source>
</reference>
<reference key="5">
    <citation type="journal article" date="2000" name="J. Cell Sci.">
        <title>Dictyostelium myosin IK is involved in the maintenance of cortical tension and affects motility and phagocytosis.</title>
        <authorList>
            <person name="Schwarz E.C."/>
            <person name="Neuhaus E.M."/>
            <person name="Kistler C."/>
            <person name="Henkel A.W."/>
            <person name="Soldati T."/>
        </authorList>
    </citation>
    <scope>FUNCTION</scope>
</reference>
<reference key="6">
    <citation type="journal article" date="2006" name="BMC Genomics">
        <title>Thirteen is enough: the myosins of Dictyostelium discoideum and their light chains.</title>
        <authorList>
            <person name="Kollmar M."/>
        </authorList>
    </citation>
    <scope>NOMENCLATURE</scope>
</reference>
<keyword id="KW-0009">Actin-binding</keyword>
<keyword id="KW-0067">ATP-binding</keyword>
<keyword id="KW-0963">Cytoplasm</keyword>
<keyword id="KW-0505">Motor protein</keyword>
<keyword id="KW-0518">Myosin</keyword>
<keyword id="KW-0547">Nucleotide-binding</keyword>
<keyword id="KW-1185">Reference proteome</keyword>
<organism>
    <name type="scientific">Dictyostelium discoideum</name>
    <name type="common">Social amoeba</name>
    <dbReference type="NCBI Taxonomy" id="44689"/>
    <lineage>
        <taxon>Eukaryota</taxon>
        <taxon>Amoebozoa</taxon>
        <taxon>Evosea</taxon>
        <taxon>Eumycetozoa</taxon>
        <taxon>Dictyostelia</taxon>
        <taxon>Dictyosteliales</taxon>
        <taxon>Dictyosteliaceae</taxon>
        <taxon>Dictyostelium</taxon>
    </lineage>
</organism>
<proteinExistence type="evidence at transcript level"/>